<evidence type="ECO:0000250" key="1"/>
<evidence type="ECO:0000255" key="2"/>
<evidence type="ECO:0000305" key="3"/>
<comment type="subunit">
    <text evidence="1">Homodimer and heterodimers.</text>
</comment>
<comment type="subcellular location">
    <subcellularLocation>
        <location evidence="1">Cell membrane</location>
        <topology evidence="1">Multi-pass membrane protein</topology>
    </subcellularLocation>
</comment>
<comment type="similarity">
    <text evidence="3">Belongs to the Casparian strip membrane proteins (CASP) family.</text>
</comment>
<comment type="sequence caution" evidence="3">
    <conflict type="erroneous gene model prediction">
        <sequence resource="EMBL-CDS" id="EFJ15741"/>
    </conflict>
</comment>
<gene>
    <name type="ORF">SELMODRAFT_117993</name>
</gene>
<accession>D8SJ65</accession>
<name>CSPL4_SELML</name>
<sequence length="191" mass="20605">MGAYDGAEAPRAAPASTAANSRPSRLLLLHSLLLRLVAVVLSILVIAVMVHAKQRVMIFKAEWDNSKAFVALVTISAICLGYSFLQFILSAFHLCSKSWKSPTKCWAWMNFIADQILTYAMLGAAAAAAELAYIAKNGSSRAQWQPICSTFNTFCTRAGASIILSFIAVLALANSSAISAYHLFRRPSSSV</sequence>
<reference key="1">
    <citation type="journal article" date="2011" name="Science">
        <title>The Selaginella genome identifies genetic changes associated with the evolution of vascular plants.</title>
        <authorList>
            <person name="Banks J.A."/>
            <person name="Nishiyama T."/>
            <person name="Hasebe M."/>
            <person name="Bowman J.L."/>
            <person name="Gribskov M."/>
            <person name="dePamphilis C."/>
            <person name="Albert V.A."/>
            <person name="Aono N."/>
            <person name="Aoyama T."/>
            <person name="Ambrose B.A."/>
            <person name="Ashton N.W."/>
            <person name="Axtell M.J."/>
            <person name="Barker E."/>
            <person name="Barker M.S."/>
            <person name="Bennetzen J.L."/>
            <person name="Bonawitz N.D."/>
            <person name="Chapple C."/>
            <person name="Cheng C."/>
            <person name="Correa L.G."/>
            <person name="Dacre M."/>
            <person name="DeBarry J."/>
            <person name="Dreyer I."/>
            <person name="Elias M."/>
            <person name="Engstrom E.M."/>
            <person name="Estelle M."/>
            <person name="Feng L."/>
            <person name="Finet C."/>
            <person name="Floyd S.K."/>
            <person name="Frommer W.B."/>
            <person name="Fujita T."/>
            <person name="Gramzow L."/>
            <person name="Gutensohn M."/>
            <person name="Harholt J."/>
            <person name="Hattori M."/>
            <person name="Heyl A."/>
            <person name="Hirai T."/>
            <person name="Hiwatashi Y."/>
            <person name="Ishikawa M."/>
            <person name="Iwata M."/>
            <person name="Karol K.G."/>
            <person name="Koehler B."/>
            <person name="Kolukisaoglu U."/>
            <person name="Kubo M."/>
            <person name="Kurata T."/>
            <person name="Lalonde S."/>
            <person name="Li K."/>
            <person name="Li Y."/>
            <person name="Litt A."/>
            <person name="Lyons E."/>
            <person name="Manning G."/>
            <person name="Maruyama T."/>
            <person name="Michael T.P."/>
            <person name="Mikami K."/>
            <person name="Miyazaki S."/>
            <person name="Morinaga S."/>
            <person name="Murata T."/>
            <person name="Mueller-Roeber B."/>
            <person name="Nelson D.R."/>
            <person name="Obara M."/>
            <person name="Oguri Y."/>
            <person name="Olmstead R.G."/>
            <person name="Onodera N."/>
            <person name="Petersen B.L."/>
            <person name="Pils B."/>
            <person name="Prigge M."/>
            <person name="Rensing S.A."/>
            <person name="Riano-Pachon D.M."/>
            <person name="Roberts A.W."/>
            <person name="Sato Y."/>
            <person name="Scheller H.V."/>
            <person name="Schulz B."/>
            <person name="Schulz C."/>
            <person name="Shakirov E.V."/>
            <person name="Shibagaki N."/>
            <person name="Shinohara N."/>
            <person name="Shippen D.E."/>
            <person name="Soerensen I."/>
            <person name="Sotooka R."/>
            <person name="Sugimoto N."/>
            <person name="Sugita M."/>
            <person name="Sumikawa N."/>
            <person name="Tanurdzic M."/>
            <person name="Theissen G."/>
            <person name="Ulvskov P."/>
            <person name="Wakazuki S."/>
            <person name="Weng J.K."/>
            <person name="Willats W.W."/>
            <person name="Wipf D."/>
            <person name="Wolf P.G."/>
            <person name="Yang L."/>
            <person name="Zimmer A.D."/>
            <person name="Zhu Q."/>
            <person name="Mitros T."/>
            <person name="Hellsten U."/>
            <person name="Loque D."/>
            <person name="Otillar R."/>
            <person name="Salamov A."/>
            <person name="Schmutz J."/>
            <person name="Shapiro H."/>
            <person name="Lindquist E."/>
            <person name="Lucas S."/>
            <person name="Rokhsar D."/>
            <person name="Grigoriev I.V."/>
        </authorList>
    </citation>
    <scope>NUCLEOTIDE SEQUENCE [LARGE SCALE GENOMIC DNA]</scope>
</reference>
<reference key="2">
    <citation type="submission" date="2008-03" db="EMBL/GenBank/DDBJ databases">
        <title>DOE Joint Genome Institute Selaginella moellendorffii EST project.</title>
        <authorList>
            <person name="Richardson P."/>
            <person name="Lucas S."/>
            <person name="Rokhsar D."/>
            <person name="Wang M."/>
            <person name="Lindquist E.A."/>
        </authorList>
    </citation>
    <scope>NUCLEOTIDE SEQUENCE [LARGE SCALE MRNA]</scope>
</reference>
<reference key="3">
    <citation type="journal article" date="2014" name="Plant Physiol.">
        <title>Functional and evolutionary analysis of the CASPARIAN STRIP MEMBRANE DOMAIN PROTEIN family.</title>
        <authorList>
            <person name="Roppolo D."/>
            <person name="Boeckmann B."/>
            <person name="Pfister A."/>
            <person name="Boutet E."/>
            <person name="Rubio M.C."/>
            <person name="Denervaud-Tendon V."/>
            <person name="Vermeer J.E."/>
            <person name="Gheyselinck J."/>
            <person name="Xenarios I."/>
            <person name="Geldner N."/>
        </authorList>
    </citation>
    <scope>GENE FAMILY</scope>
    <scope>NOMENCLATURE</scope>
</reference>
<feature type="chain" id="PRO_0000412051" description="CASP-like protein 2U4">
    <location>
        <begin position="1"/>
        <end position="191"/>
    </location>
</feature>
<feature type="topological domain" description="Cytoplasmic" evidence="2">
    <location>
        <begin position="1"/>
        <end position="25"/>
    </location>
</feature>
<feature type="transmembrane region" description="Helical" evidence="2">
    <location>
        <begin position="26"/>
        <end position="46"/>
    </location>
</feature>
<feature type="topological domain" description="Extracellular" evidence="2">
    <location>
        <begin position="47"/>
        <end position="68"/>
    </location>
</feature>
<feature type="transmembrane region" description="Helical" evidence="2">
    <location>
        <begin position="69"/>
        <end position="89"/>
    </location>
</feature>
<feature type="topological domain" description="Cytoplasmic" evidence="2">
    <location>
        <begin position="90"/>
        <end position="114"/>
    </location>
</feature>
<feature type="transmembrane region" description="Helical" evidence="2">
    <location>
        <begin position="115"/>
        <end position="135"/>
    </location>
</feature>
<feature type="topological domain" description="Extracellular" evidence="2">
    <location>
        <begin position="136"/>
        <end position="157"/>
    </location>
</feature>
<feature type="transmembrane region" description="Helical" evidence="2">
    <location>
        <begin position="158"/>
        <end position="178"/>
    </location>
</feature>
<feature type="topological domain" description="Cytoplasmic" evidence="2">
    <location>
        <begin position="179"/>
        <end position="191"/>
    </location>
</feature>
<feature type="glycosylation site" description="N-linked (GlcNAc...) asparagine" evidence="2">
    <location>
        <position position="137"/>
    </location>
</feature>
<dbReference type="EMBL" id="GL377622">
    <property type="protein sequence ID" value="EFJ15741.1"/>
    <property type="status" value="ALT_SEQ"/>
    <property type="molecule type" value="Genomic_DNA"/>
</dbReference>
<dbReference type="RefSeq" id="XP_002983399.1">
    <property type="nucleotide sequence ID" value="XM_002983353.1"/>
</dbReference>
<dbReference type="KEGG" id="smo:SELMODRAFT_117993"/>
<dbReference type="HOGENOM" id="CLU_066104_2_3_1"/>
<dbReference type="InParanoid" id="D8SJ65"/>
<dbReference type="OrthoDB" id="749363at2759"/>
<dbReference type="Proteomes" id="UP000001514">
    <property type="component" value="Unassembled WGS sequence"/>
</dbReference>
<dbReference type="GO" id="GO:0005886">
    <property type="term" value="C:plasma membrane"/>
    <property type="evidence" value="ECO:0007669"/>
    <property type="project" value="UniProtKB-SubCell"/>
</dbReference>
<dbReference type="InterPro" id="IPR006459">
    <property type="entry name" value="CASP/CASPL"/>
</dbReference>
<dbReference type="InterPro" id="IPR006702">
    <property type="entry name" value="CASP_dom"/>
</dbReference>
<dbReference type="NCBIfam" id="TIGR01569">
    <property type="entry name" value="A_tha_TIGR01569"/>
    <property type="match status" value="1"/>
</dbReference>
<dbReference type="PANTHER" id="PTHR33573:SF30">
    <property type="entry name" value="CASP-LIKE PROTEIN 2C1-RELATED"/>
    <property type="match status" value="1"/>
</dbReference>
<dbReference type="PANTHER" id="PTHR33573">
    <property type="entry name" value="CASP-LIKE PROTEIN 4A4"/>
    <property type="match status" value="1"/>
</dbReference>
<dbReference type="Pfam" id="PF04535">
    <property type="entry name" value="CASP_dom"/>
    <property type="match status" value="1"/>
</dbReference>
<keyword id="KW-1003">Cell membrane</keyword>
<keyword id="KW-0325">Glycoprotein</keyword>
<keyword id="KW-0472">Membrane</keyword>
<keyword id="KW-1185">Reference proteome</keyword>
<keyword id="KW-0812">Transmembrane</keyword>
<keyword id="KW-1133">Transmembrane helix</keyword>
<organism>
    <name type="scientific">Selaginella moellendorffii</name>
    <name type="common">Spikemoss</name>
    <dbReference type="NCBI Taxonomy" id="88036"/>
    <lineage>
        <taxon>Eukaryota</taxon>
        <taxon>Viridiplantae</taxon>
        <taxon>Streptophyta</taxon>
        <taxon>Embryophyta</taxon>
        <taxon>Tracheophyta</taxon>
        <taxon>Lycopodiopsida</taxon>
        <taxon>Selaginellales</taxon>
        <taxon>Selaginellaceae</taxon>
        <taxon>Selaginella</taxon>
    </lineage>
</organism>
<proteinExistence type="inferred from homology"/>
<protein>
    <recommendedName>
        <fullName>CASP-like protein 2U4</fullName>
        <shortName>SmCASPL2U4</shortName>
    </recommendedName>
</protein>